<dbReference type="EMBL" id="AC136004">
    <property type="status" value="NOT_ANNOTATED_CDS"/>
    <property type="molecule type" value="Genomic_DNA"/>
</dbReference>
<dbReference type="EMBL" id="BC034069">
    <property type="status" value="NOT_ANNOTATED_CDS"/>
    <property type="molecule type" value="mRNA"/>
</dbReference>
<dbReference type="EMBL" id="BC110691">
    <property type="status" value="NOT_ANNOTATED_CDS"/>
    <property type="molecule type" value="mRNA"/>
</dbReference>
<dbReference type="CCDS" id="CCDS52275.1"/>
<dbReference type="RefSeq" id="NP_001156004.1">
    <property type="nucleotide sequence ID" value="NM_001162532.1"/>
</dbReference>
<dbReference type="SMR" id="Q8K064"/>
<dbReference type="FunCoup" id="Q8K064">
    <property type="interactions" value="388"/>
</dbReference>
<dbReference type="STRING" id="10090.ENSMUSP00000103080"/>
<dbReference type="GlyCosmos" id="Q8K064">
    <property type="glycosylation" value="1 site, No reported glycans"/>
</dbReference>
<dbReference type="GlyGen" id="Q8K064">
    <property type="glycosylation" value="1 site"/>
</dbReference>
<dbReference type="iPTMnet" id="Q8K064"/>
<dbReference type="PhosphoSitePlus" id="Q8K064"/>
<dbReference type="PaxDb" id="10090-ENSMUSP00000103080"/>
<dbReference type="ProteomicsDB" id="271828"/>
<dbReference type="Antibodypedia" id="29037">
    <property type="antibodies" value="43 antibodies from 12 providers"/>
</dbReference>
<dbReference type="Ensembl" id="ENSMUST00000107456.4">
    <property type="protein sequence ID" value="ENSMUSP00000103080.3"/>
    <property type="gene ID" value="ENSMUSG00000078670.4"/>
</dbReference>
<dbReference type="GeneID" id="100038347"/>
<dbReference type="KEGG" id="mmu:100038347"/>
<dbReference type="UCSC" id="uc009hrf.2">
    <property type="organism name" value="mouse"/>
</dbReference>
<dbReference type="AGR" id="MGI:3698178"/>
<dbReference type="CTD" id="400451"/>
<dbReference type="MGI" id="MGI:3698178">
    <property type="gene designation" value="Fam174b"/>
</dbReference>
<dbReference type="VEuPathDB" id="HostDB:ENSMUSG00000078670"/>
<dbReference type="eggNOG" id="ENOG502S4RE">
    <property type="taxonomic scope" value="Eukaryota"/>
</dbReference>
<dbReference type="GeneTree" id="ENSGT00730000111392"/>
<dbReference type="HOGENOM" id="CLU_140744_1_0_1"/>
<dbReference type="InParanoid" id="Q8K064"/>
<dbReference type="OMA" id="PGNATGM"/>
<dbReference type="OrthoDB" id="9950075at2759"/>
<dbReference type="PhylomeDB" id="Q8K064"/>
<dbReference type="TreeFam" id="TF105425"/>
<dbReference type="BioGRID-ORCS" id="100038347">
    <property type="hits" value="3 hits in 78 CRISPR screens"/>
</dbReference>
<dbReference type="ChiTaRS" id="Fam174b">
    <property type="organism name" value="mouse"/>
</dbReference>
<dbReference type="PRO" id="PR:Q8K064"/>
<dbReference type="Proteomes" id="UP000000589">
    <property type="component" value="Chromosome 7"/>
</dbReference>
<dbReference type="RNAct" id="Q8K064">
    <property type="molecule type" value="protein"/>
</dbReference>
<dbReference type="Bgee" id="ENSMUSG00000078670">
    <property type="expression patterns" value="Expressed in interventricular septum and 245 other cell types or tissues"/>
</dbReference>
<dbReference type="ExpressionAtlas" id="Q8K064">
    <property type="expression patterns" value="baseline and differential"/>
</dbReference>
<dbReference type="GO" id="GO:0005794">
    <property type="term" value="C:Golgi apparatus"/>
    <property type="evidence" value="ECO:0000250"/>
    <property type="project" value="UniProtKB"/>
</dbReference>
<dbReference type="GO" id="GO:0005886">
    <property type="term" value="C:plasma membrane"/>
    <property type="evidence" value="ECO:0000250"/>
    <property type="project" value="UniProtKB"/>
</dbReference>
<dbReference type="GO" id="GO:0007030">
    <property type="term" value="P:Golgi organization"/>
    <property type="evidence" value="ECO:0000250"/>
    <property type="project" value="UniProtKB"/>
</dbReference>
<dbReference type="InterPro" id="IPR009565">
    <property type="entry name" value="FAM174-like"/>
</dbReference>
<dbReference type="PANTHER" id="PTHR28607">
    <property type="entry name" value="EXPRESSED PROTEIN"/>
    <property type="match status" value="1"/>
</dbReference>
<dbReference type="PANTHER" id="PTHR28607:SF3">
    <property type="entry name" value="MEMBRANE PROTEIN FAM174B"/>
    <property type="match status" value="1"/>
</dbReference>
<dbReference type="Pfam" id="PF06679">
    <property type="entry name" value="DUF1180"/>
    <property type="match status" value="1"/>
</dbReference>
<feature type="signal peptide" evidence="2">
    <location>
        <begin position="1"/>
        <end position="27"/>
    </location>
</feature>
<feature type="chain" id="PRO_0000326115" description="Membrane protein FAM174B">
    <location>
        <begin position="28"/>
        <end position="153"/>
    </location>
</feature>
<feature type="topological domain" description="Extracellular" evidence="2">
    <location>
        <begin position="28"/>
        <end position="84"/>
    </location>
</feature>
<feature type="transmembrane region" description="Helical" evidence="2">
    <location>
        <begin position="85"/>
        <end position="105"/>
    </location>
</feature>
<feature type="topological domain" description="Cytoplasmic" evidence="2">
    <location>
        <begin position="106"/>
        <end position="153"/>
    </location>
</feature>
<feature type="region of interest" description="Disordered" evidence="3">
    <location>
        <begin position="31"/>
        <end position="67"/>
    </location>
</feature>
<feature type="glycosylation site" description="N-linked (GlcNAc...) asparagine" evidence="2">
    <location>
        <position position="50"/>
    </location>
</feature>
<feature type="sequence conflict" description="In Ref. 2; BC034069/BC110691." evidence="4" ref="2">
    <original>Q</original>
    <variation>P</variation>
    <location>
        <position position="7"/>
    </location>
</feature>
<organism>
    <name type="scientific">Mus musculus</name>
    <name type="common">Mouse</name>
    <dbReference type="NCBI Taxonomy" id="10090"/>
    <lineage>
        <taxon>Eukaryota</taxon>
        <taxon>Metazoa</taxon>
        <taxon>Chordata</taxon>
        <taxon>Craniata</taxon>
        <taxon>Vertebrata</taxon>
        <taxon>Euteleostomi</taxon>
        <taxon>Mammalia</taxon>
        <taxon>Eutheria</taxon>
        <taxon>Euarchontoglires</taxon>
        <taxon>Glires</taxon>
        <taxon>Rodentia</taxon>
        <taxon>Myomorpha</taxon>
        <taxon>Muroidea</taxon>
        <taxon>Muridae</taxon>
        <taxon>Murinae</taxon>
        <taxon>Mus</taxon>
        <taxon>Mus</taxon>
    </lineage>
</organism>
<reference key="1">
    <citation type="journal article" date="2009" name="PLoS Biol.">
        <title>Lineage-specific biology revealed by a finished genome assembly of the mouse.</title>
        <authorList>
            <person name="Church D.M."/>
            <person name="Goodstadt L."/>
            <person name="Hillier L.W."/>
            <person name="Zody M.C."/>
            <person name="Goldstein S."/>
            <person name="She X."/>
            <person name="Bult C.J."/>
            <person name="Agarwala R."/>
            <person name="Cherry J.L."/>
            <person name="DiCuccio M."/>
            <person name="Hlavina W."/>
            <person name="Kapustin Y."/>
            <person name="Meric P."/>
            <person name="Maglott D."/>
            <person name="Birtle Z."/>
            <person name="Marques A.C."/>
            <person name="Graves T."/>
            <person name="Zhou S."/>
            <person name="Teague B."/>
            <person name="Potamousis K."/>
            <person name="Churas C."/>
            <person name="Place M."/>
            <person name="Herschleb J."/>
            <person name="Runnheim R."/>
            <person name="Forrest D."/>
            <person name="Amos-Landgraf J."/>
            <person name="Schwartz D.C."/>
            <person name="Cheng Z."/>
            <person name="Lindblad-Toh K."/>
            <person name="Eichler E.E."/>
            <person name="Ponting C.P."/>
        </authorList>
    </citation>
    <scope>NUCLEOTIDE SEQUENCE [LARGE SCALE GENOMIC DNA]</scope>
    <source>
        <strain>C57BL/6J</strain>
    </source>
</reference>
<reference key="2">
    <citation type="journal article" date="2004" name="Genome Res.">
        <title>The status, quality, and expansion of the NIH full-length cDNA project: the Mammalian Gene Collection (MGC).</title>
        <authorList>
            <consortium name="The MGC Project Team"/>
        </authorList>
    </citation>
    <scope>NUCLEOTIDE SEQUENCE [LARGE SCALE MRNA]</scope>
    <source>
        <strain>FVB/N</strain>
        <tissue>Colon</tissue>
        <tissue>Olfactory epithelium</tissue>
    </source>
</reference>
<keyword id="KW-1003">Cell membrane</keyword>
<keyword id="KW-0325">Glycoprotein</keyword>
<keyword id="KW-0333">Golgi apparatus</keyword>
<keyword id="KW-0472">Membrane</keyword>
<keyword id="KW-1185">Reference proteome</keyword>
<keyword id="KW-0732">Signal</keyword>
<keyword id="KW-0812">Transmembrane</keyword>
<keyword id="KW-1133">Transmembrane helix</keyword>
<proteinExistence type="evidence at transcript level"/>
<accession>Q8K064</accession>
<accession>Q2NLC2</accession>
<evidence type="ECO:0000250" key="1">
    <source>
        <dbReference type="UniProtKB" id="Q3ZCQ3"/>
    </source>
</evidence>
<evidence type="ECO:0000255" key="2"/>
<evidence type="ECO:0000256" key="3">
    <source>
        <dbReference type="SAM" id="MobiDB-lite"/>
    </source>
</evidence>
<evidence type="ECO:0000305" key="4"/>
<comment type="function">
    <text evidence="1">Essential for Golgi structural integrity.</text>
</comment>
<comment type="subcellular location">
    <subcellularLocation>
        <location evidence="1">Cell membrane</location>
        <topology evidence="2">Single-pass type I membrane protein</topology>
    </subcellularLocation>
    <subcellularLocation>
        <location evidence="1">Golgi apparatus</location>
    </subcellularLocation>
</comment>
<comment type="similarity">
    <text evidence="4">Belongs to the FAM174 family.</text>
</comment>
<sequence>MSALPPQPPPPLLLLLLALLAAPAALARRAESASASQPEAEHQPPPGPGNATQLGSGMAGGGSSNSSVDAVVTRISSLLRDLPTLKATVIVACAFSALLIACLLLRVFRLGKRLKKTRKYDIITTPAERVEMAPLNEEDDEDEDSTVFDIKYR</sequence>
<name>F174B_MOUSE</name>
<gene>
    <name type="primary">Fam174b</name>
</gene>
<protein>
    <recommendedName>
        <fullName>Membrane protein FAM174B</fullName>
    </recommendedName>
</protein>